<accession>P19875</accession>
<accession>Q6FGD6</accession>
<accession>Q9UPB8</accession>
<reference key="1">
    <citation type="journal article" date="1990" name="J. Exp. Med.">
        <title>Cloning and characterization of cDNAs for murine macrophage inflammatory protein 2 and its human homologues.</title>
        <authorList>
            <person name="Tekamp-Olson P."/>
            <person name="Gallegos C."/>
            <person name="Bauer D."/>
            <person name="McClain J."/>
            <person name="Sherry B."/>
            <person name="Fabre M."/>
            <person name="van Deventer S."/>
            <person name="Cerami A."/>
        </authorList>
    </citation>
    <scope>NUCLEOTIDE SEQUENCE [MRNA]</scope>
    <source>
        <tissue>Histiocytic lymphoma</tissue>
    </source>
</reference>
<reference key="2">
    <citation type="journal article" date="1990" name="Mol. Cell. Biol.">
        <title>Cloning and sequencing of a new gro transcript from activated human monocytes: expression in leukocytes and wound tissue.</title>
        <authorList>
            <person name="Iida N."/>
            <person name="Grotendorst G.R."/>
        </authorList>
    </citation>
    <scope>NUCLEOTIDE SEQUENCE [MRNA]</scope>
</reference>
<reference key="3">
    <citation type="journal article" date="1990" name="Proc. Natl. Acad. Sci. U.S.A.">
        <title>Identification of three related human GRO genes encoding cytokine functions.</title>
        <authorList>
            <person name="Haskill S."/>
            <person name="Peace A."/>
            <person name="Morris J."/>
            <person name="Sporn S.A."/>
            <person name="Anisowicz A."/>
            <person name="Lee S.W."/>
            <person name="Smith T."/>
            <person name="Martin G."/>
            <person name="Ralph P."/>
            <person name="Sager R."/>
        </authorList>
    </citation>
    <scope>NUCLEOTIDE SEQUENCE [MRNA]</scope>
</reference>
<reference key="4">
    <citation type="submission" date="2004-06" db="EMBL/GenBank/DDBJ databases">
        <title>Cloning of human full open reading frames in Gateway(TM) system entry vector (pDONR201).</title>
        <authorList>
            <person name="Ebert L."/>
            <person name="Schick M."/>
            <person name="Neubert P."/>
            <person name="Schatten R."/>
            <person name="Henze S."/>
            <person name="Korn B."/>
        </authorList>
    </citation>
    <scope>NUCLEOTIDE SEQUENCE [LARGE SCALE MRNA]</scope>
</reference>
<reference key="5">
    <citation type="submission" date="2005-07" db="EMBL/GenBank/DDBJ databases">
        <authorList>
            <person name="Mural R.J."/>
            <person name="Istrail S."/>
            <person name="Sutton G.G."/>
            <person name="Florea L."/>
            <person name="Halpern A.L."/>
            <person name="Mobarry C.M."/>
            <person name="Lippert R."/>
            <person name="Walenz B."/>
            <person name="Shatkay H."/>
            <person name="Dew I."/>
            <person name="Miller J.R."/>
            <person name="Flanigan M.J."/>
            <person name="Edwards N.J."/>
            <person name="Bolanos R."/>
            <person name="Fasulo D."/>
            <person name="Halldorsson B.V."/>
            <person name="Hannenhalli S."/>
            <person name="Turner R."/>
            <person name="Yooseph S."/>
            <person name="Lu F."/>
            <person name="Nusskern D.R."/>
            <person name="Shue B.C."/>
            <person name="Zheng X.H."/>
            <person name="Zhong F."/>
            <person name="Delcher A.L."/>
            <person name="Huson D.H."/>
            <person name="Kravitz S.A."/>
            <person name="Mouchard L."/>
            <person name="Reinert K."/>
            <person name="Remington K.A."/>
            <person name="Clark A.G."/>
            <person name="Waterman M.S."/>
            <person name="Eichler E.E."/>
            <person name="Adams M.D."/>
            <person name="Hunkapiller M.W."/>
            <person name="Myers E.W."/>
            <person name="Venter J.C."/>
        </authorList>
    </citation>
    <scope>NUCLEOTIDE SEQUENCE [LARGE SCALE GENOMIC DNA]</scope>
</reference>
<reference key="6">
    <citation type="journal article" date="2004" name="Genome Res.">
        <title>The status, quality, and expansion of the NIH full-length cDNA project: the Mammalian Gene Collection (MGC).</title>
        <authorList>
            <consortium name="The MGC Project Team"/>
        </authorList>
    </citation>
    <scope>NUCLEOTIDE SEQUENCE [LARGE SCALE MRNA]</scope>
    <source>
        <tissue>Eye</tissue>
    </source>
</reference>
<reference key="7">
    <citation type="submission" date="1998-01" db="EMBL/GenBank/DDBJ databases">
        <authorList>
            <person name="Jang J.S."/>
            <person name="Kim B.E."/>
        </authorList>
    </citation>
    <scope>NUCLEOTIDE SEQUENCE [MRNA] OF 35-107</scope>
</reference>
<reference key="8">
    <citation type="journal article" date="1990" name="J. Immunol.">
        <title>Monocyte adherence results in selective induction of novel genes sharing homology with mediators of inflammation and tissue repair.</title>
        <authorList>
            <person name="Sporn S.A."/>
            <person name="Eierman D.F."/>
            <person name="Johnson C.E."/>
            <person name="Morris J."/>
            <person name="Martin G."/>
            <person name="Ladner M."/>
            <person name="Haskill S."/>
        </authorList>
    </citation>
    <scope>NUCLEOTIDE SEQUENCE [MRNA] OF 56-107</scope>
</reference>
<reference key="9">
    <citation type="journal article" date="2000" name="J. Immunol.">
        <title>Identification of unique truncated KC/GRO beta chemokines with potent hematopoietic and anti-infective activities.</title>
        <authorList>
            <person name="King A.G."/>
            <person name="Johanson K."/>
            <person name="Frey C.L."/>
            <person name="DeMarsh P.L."/>
            <person name="White J.R."/>
            <person name="McDevitt P."/>
            <person name="McNulty D."/>
            <person name="Balcarek J."/>
            <person name="Jonak Z.L."/>
            <person name="Bhatnagar P.K."/>
            <person name="Pelus L.M."/>
        </authorList>
    </citation>
    <scope>PROTEIN SEQUENCE OF 39-56</scope>
    <scope>IDENTIFICATION OF GRO-BETA(5-73) BY MASS SPECTROMETRY</scope>
    <scope>PROTEOLYTIC PROCESSING OF N-TERMINUS</scope>
    <scope>FUNCTION</scope>
</reference>
<reference key="10">
    <citation type="journal article" date="1999" name="J. Mol. Biol.">
        <title>Nuclear magnetic resonance solution structure of truncated human GRObeta [5-73] and its structural comparison with CXC chemokine family members GROalpha and IL-8.</title>
        <authorList>
            <person name="Qian Y.Q."/>
            <person name="Johanson K.O."/>
            <person name="McDevitt P."/>
        </authorList>
    </citation>
    <scope>STRUCTURE BY NMR OF 39-107</scope>
</reference>
<sequence length="107" mass="11389">MARATLSAAPSNPRLLRVALLLLLLVAASRRAAGAPLATELRCQCLQTLQGIHLKNIQSVKVKSPGPHCAQTEVIATLKNGQKACLNPASPMVKKIIEKMLKNGKSN</sequence>
<protein>
    <recommendedName>
        <fullName>C-X-C motif chemokine 2</fullName>
    </recommendedName>
    <alternativeName>
        <fullName>Growth-regulated protein beta</fullName>
        <shortName>Gro-beta</shortName>
    </alternativeName>
    <alternativeName>
        <fullName>Macrophage inflammatory protein 2-alpha</fullName>
        <shortName>MIP2-alpha</shortName>
    </alternativeName>
    <component>
        <recommendedName>
            <fullName>GRO-beta(5-73)</fullName>
        </recommendedName>
        <alternativeName>
            <fullName>GRO-beta-T</fullName>
        </alternativeName>
        <alternativeName>
            <fullName>Hematopoietic synergistic factor</fullName>
            <shortName>HSF</shortName>
        </alternativeName>
        <alternativeName>
            <fullName>SB-251353</fullName>
        </alternativeName>
    </component>
</protein>
<proteinExistence type="evidence at protein level"/>
<name>CXCL2_HUMAN</name>
<keyword id="KW-0002">3D-structure</keyword>
<keyword id="KW-0145">Chemotaxis</keyword>
<keyword id="KW-0202">Cytokine</keyword>
<keyword id="KW-0903">Direct protein sequencing</keyword>
<keyword id="KW-1015">Disulfide bond</keyword>
<keyword id="KW-0395">Inflammatory response</keyword>
<keyword id="KW-0582">Pharmaceutical</keyword>
<keyword id="KW-1267">Proteomics identification</keyword>
<keyword id="KW-1185">Reference proteome</keyword>
<keyword id="KW-0964">Secreted</keyword>
<keyword id="KW-0732">Signal</keyword>
<organism>
    <name type="scientific">Homo sapiens</name>
    <name type="common">Human</name>
    <dbReference type="NCBI Taxonomy" id="9606"/>
    <lineage>
        <taxon>Eukaryota</taxon>
        <taxon>Metazoa</taxon>
        <taxon>Chordata</taxon>
        <taxon>Craniata</taxon>
        <taxon>Vertebrata</taxon>
        <taxon>Euteleostomi</taxon>
        <taxon>Mammalia</taxon>
        <taxon>Eutheria</taxon>
        <taxon>Euarchontoglires</taxon>
        <taxon>Primates</taxon>
        <taxon>Haplorrhini</taxon>
        <taxon>Catarrhini</taxon>
        <taxon>Hominidae</taxon>
        <taxon>Homo</taxon>
    </lineage>
</organism>
<comment type="function">
    <text evidence="1">Produced by activated monocytes and neutrophils and expressed at sites of inflammation. Hematoregulatory chemokine, which, in vitro, suppresses hematopoietic progenitor cell proliferation. GRO-beta(5-73) shows a highly enhanced hematopoietic activity.</text>
</comment>
<comment type="interaction">
    <interactant intactId="EBI-2114901">
        <id>P19875</id>
    </interactant>
    <interactant intactId="EBI-2848366">
        <id>P13501</id>
        <label>CCL5</label>
    </interactant>
    <organismsDiffer>false</organismsDiffer>
    <experiments>2</experiments>
</comment>
<comment type="interaction">
    <interactant intactId="EBI-2114901">
        <id>P19875</id>
    </interactant>
    <interactant intactId="EBI-3913254">
        <id>P48061</id>
        <label>CXCL12</label>
    </interactant>
    <organismsDiffer>false</organismsDiffer>
    <experiments>2</experiments>
</comment>
<comment type="interaction">
    <interactant intactId="EBI-2114901">
        <id>P19875</id>
    </interactant>
    <interactant intactId="EBI-2871277">
        <id>P27487</id>
        <label>DPP4</label>
    </interactant>
    <organismsDiffer>false</organismsDiffer>
    <experiments>2</experiments>
</comment>
<comment type="interaction">
    <interactant intactId="EBI-2114901">
        <id>P19875</id>
    </interactant>
    <interactant intactId="EBI-2565740">
        <id>P02776</id>
        <label>PF4</label>
    </interactant>
    <organismsDiffer>false</organismsDiffer>
    <experiments>3</experiments>
</comment>
<comment type="subcellular location">
    <subcellularLocation>
        <location>Secreted</location>
    </subcellularLocation>
</comment>
<comment type="PTM">
    <text evidence="1">The N-terminal processed form GRO-beta(5-73) is produced by proteolytic cleavage after secretion from bone marrow stromal cells.</text>
</comment>
<comment type="pharmaceutical">
    <text>GRO-beta(5-73) is available under the name Garnocestim as immunomodulator. It is used prior to hematopoietic transplantation for peripheral blood stem cell mobilization and reduction of incidence, duration, and/or severity of chemotherapy induced cytopenias.</text>
</comment>
<comment type="similarity">
    <text evidence="2">Belongs to the intercrine alpha (chemokine CxC) family.</text>
</comment>
<comment type="online information" name="Wikipedia">
    <link uri="https://en.wikipedia.org/wiki/CXCL2"/>
    <text>CXCL2 entry</text>
</comment>
<feature type="signal peptide">
    <location>
        <begin position="1"/>
        <end position="34"/>
    </location>
</feature>
<feature type="chain" id="PRO_0000005063" description="C-X-C motif chemokine 2">
    <location>
        <begin position="35"/>
        <end position="107"/>
    </location>
</feature>
<feature type="chain" id="PRO_0000005064" description="GRO-beta(5-73)">
    <location>
        <begin position="39"/>
        <end position="107"/>
    </location>
</feature>
<feature type="disulfide bond">
    <location>
        <begin position="43"/>
        <end position="69"/>
    </location>
</feature>
<feature type="disulfide bond">
    <location>
        <begin position="45"/>
        <end position="85"/>
    </location>
</feature>
<feature type="strand" evidence="3">
    <location>
        <begin position="49"/>
        <end position="51"/>
    </location>
</feature>
<feature type="helix" evidence="4">
    <location>
        <begin position="54"/>
        <end position="56"/>
    </location>
</feature>
<feature type="strand" evidence="4">
    <location>
        <begin position="57"/>
        <end position="63"/>
    </location>
</feature>
<feature type="strand" evidence="4">
    <location>
        <begin position="69"/>
        <end position="71"/>
    </location>
</feature>
<feature type="strand" evidence="4">
    <location>
        <begin position="73"/>
        <end position="78"/>
    </location>
</feature>
<feature type="strand" evidence="4">
    <location>
        <begin position="83"/>
        <end position="86"/>
    </location>
</feature>
<feature type="helix" evidence="4">
    <location>
        <begin position="91"/>
        <end position="101"/>
    </location>
</feature>
<gene>
    <name type="primary">CXCL2</name>
    <name type="synonym">GRO2</name>
    <name type="synonym">GROB</name>
    <name type="synonym">MIP2A</name>
    <name type="synonym">SCYB2</name>
</gene>
<dbReference type="EMBL" id="X53799">
    <property type="protein sequence ID" value="CAA37808.1"/>
    <property type="molecule type" value="mRNA"/>
</dbReference>
<dbReference type="EMBL" id="M36820">
    <property type="protein sequence ID" value="AAA63183.1"/>
    <property type="molecule type" value="mRNA"/>
</dbReference>
<dbReference type="EMBL" id="M57731">
    <property type="protein sequence ID" value="AAA63182.1"/>
    <property type="molecule type" value="mRNA"/>
</dbReference>
<dbReference type="EMBL" id="CR542171">
    <property type="protein sequence ID" value="CAG46968.1"/>
    <property type="molecule type" value="mRNA"/>
</dbReference>
<dbReference type="EMBL" id="CH471057">
    <property type="protein sequence ID" value="EAX05700.1"/>
    <property type="molecule type" value="Genomic_DNA"/>
</dbReference>
<dbReference type="EMBL" id="BC015753">
    <property type="protein sequence ID" value="AAH15753.1"/>
    <property type="molecule type" value="mRNA"/>
</dbReference>
<dbReference type="EMBL" id="AF043340">
    <property type="protein sequence ID" value="AAC03540.1"/>
    <property type="molecule type" value="mRNA"/>
</dbReference>
<dbReference type="CCDS" id="CCDS34008.1"/>
<dbReference type="PIR" id="JH0281">
    <property type="entry name" value="JH0281"/>
</dbReference>
<dbReference type="RefSeq" id="NP_002080.1">
    <property type="nucleotide sequence ID" value="NM_002089.4"/>
</dbReference>
<dbReference type="PDB" id="1QNK">
    <property type="method" value="NMR"/>
    <property type="chains" value="A/B=39-107"/>
</dbReference>
<dbReference type="PDB" id="5OB5">
    <property type="method" value="X-ray"/>
    <property type="resolution" value="1.65 A"/>
    <property type="chains" value="A=40-102"/>
</dbReference>
<dbReference type="PDB" id="8XVU">
    <property type="method" value="EM"/>
    <property type="resolution" value="3.09 A"/>
    <property type="chains" value="D/E=35-107"/>
</dbReference>
<dbReference type="PDB" id="8XXH">
    <property type="method" value="EM"/>
    <property type="resolution" value="2.80 A"/>
    <property type="chains" value="D/E=35-107"/>
</dbReference>
<dbReference type="PDBsum" id="1QNK"/>
<dbReference type="PDBsum" id="5OB5"/>
<dbReference type="PDBsum" id="8XVU"/>
<dbReference type="PDBsum" id="8XXH"/>
<dbReference type="EMDB" id="EMD-38719"/>
<dbReference type="EMDB" id="EMD-38749"/>
<dbReference type="SMR" id="P19875"/>
<dbReference type="BioGRID" id="109177">
    <property type="interactions" value="22"/>
</dbReference>
<dbReference type="DIP" id="DIP-5908N"/>
<dbReference type="FunCoup" id="P19875">
    <property type="interactions" value="1077"/>
</dbReference>
<dbReference type="IntAct" id="P19875">
    <property type="interactions" value="22"/>
</dbReference>
<dbReference type="MINT" id="P19875"/>
<dbReference type="STRING" id="9606.ENSP00000427279"/>
<dbReference type="BindingDB" id="P19875"/>
<dbReference type="ChEMBL" id="CHEMBL3286076"/>
<dbReference type="DrugBank" id="DB06685">
    <property type="generic name" value="Laquinimod"/>
</dbReference>
<dbReference type="BioMuta" id="CXCL2"/>
<dbReference type="DMDM" id="127085"/>
<dbReference type="jPOST" id="P19875"/>
<dbReference type="MassIVE" id="P19875"/>
<dbReference type="PaxDb" id="9606-ENSP00000427279"/>
<dbReference type="PeptideAtlas" id="P19875"/>
<dbReference type="ProteomicsDB" id="53697"/>
<dbReference type="Antibodypedia" id="13343">
    <property type="antibodies" value="499 antibodies from 32 providers"/>
</dbReference>
<dbReference type="DNASU" id="2920"/>
<dbReference type="Ensembl" id="ENST00000508487.3">
    <property type="protein sequence ID" value="ENSP00000427279.1"/>
    <property type="gene ID" value="ENSG00000081041.9"/>
</dbReference>
<dbReference type="GeneID" id="2920"/>
<dbReference type="KEGG" id="hsa:2920"/>
<dbReference type="MANE-Select" id="ENST00000508487.3">
    <property type="protein sequence ID" value="ENSP00000427279.1"/>
    <property type="RefSeq nucleotide sequence ID" value="NM_002089.4"/>
    <property type="RefSeq protein sequence ID" value="NP_002080.1"/>
</dbReference>
<dbReference type="UCSC" id="uc003hhm.5">
    <property type="organism name" value="human"/>
</dbReference>
<dbReference type="AGR" id="HGNC:4603"/>
<dbReference type="CTD" id="2920"/>
<dbReference type="DisGeNET" id="2920"/>
<dbReference type="GeneCards" id="CXCL2"/>
<dbReference type="HGNC" id="HGNC:4603">
    <property type="gene designation" value="CXCL2"/>
</dbReference>
<dbReference type="HPA" id="ENSG00000081041">
    <property type="expression patterns" value="Tissue enriched (liver)"/>
</dbReference>
<dbReference type="MIM" id="139110">
    <property type="type" value="gene"/>
</dbReference>
<dbReference type="neXtProt" id="NX_P19875"/>
<dbReference type="OpenTargets" id="ENSG00000081041"/>
<dbReference type="PharmGKB" id="PA35051"/>
<dbReference type="VEuPathDB" id="HostDB:ENSG00000081041"/>
<dbReference type="eggNOG" id="ENOG502S7MM">
    <property type="taxonomic scope" value="Eukaryota"/>
</dbReference>
<dbReference type="GeneTree" id="ENSGT00940000163986"/>
<dbReference type="HOGENOM" id="CLU_143902_1_1_1"/>
<dbReference type="InParanoid" id="P19875"/>
<dbReference type="OMA" id="NGREACL"/>
<dbReference type="OrthoDB" id="8872899at2759"/>
<dbReference type="PAN-GO" id="P19875">
    <property type="GO annotations" value="8 GO annotations based on evolutionary models"/>
</dbReference>
<dbReference type="PhylomeDB" id="P19875"/>
<dbReference type="TreeFam" id="TF333433"/>
<dbReference type="PathwayCommons" id="P19875"/>
<dbReference type="Reactome" id="R-HSA-380108">
    <property type="pathway name" value="Chemokine receptors bind chemokines"/>
</dbReference>
<dbReference type="Reactome" id="R-HSA-418594">
    <property type="pathway name" value="G alpha (i) signalling events"/>
</dbReference>
<dbReference type="Reactome" id="R-HSA-6783783">
    <property type="pathway name" value="Interleukin-10 signaling"/>
</dbReference>
<dbReference type="SignaLink" id="P19875"/>
<dbReference type="SIGNOR" id="P19875"/>
<dbReference type="BioGRID-ORCS" id="2920">
    <property type="hits" value="58 hits in 1064 CRISPR screens"/>
</dbReference>
<dbReference type="ChiTaRS" id="CXCL2">
    <property type="organism name" value="human"/>
</dbReference>
<dbReference type="EvolutionaryTrace" id="P19875"/>
<dbReference type="GenomeRNAi" id="2920"/>
<dbReference type="Pharos" id="P19875">
    <property type="development level" value="Tbio"/>
</dbReference>
<dbReference type="PRO" id="PR:P19875"/>
<dbReference type="Proteomes" id="UP000005640">
    <property type="component" value="Chromosome 4"/>
</dbReference>
<dbReference type="RNAct" id="P19875">
    <property type="molecule type" value="protein"/>
</dbReference>
<dbReference type="Bgee" id="ENSG00000081041">
    <property type="expression patterns" value="Expressed in mucosa of paranasal sinus and 180 other cell types or tissues"/>
</dbReference>
<dbReference type="ExpressionAtlas" id="P19875">
    <property type="expression patterns" value="baseline and differential"/>
</dbReference>
<dbReference type="GO" id="GO:0005576">
    <property type="term" value="C:extracellular region"/>
    <property type="evidence" value="ECO:0000304"/>
    <property type="project" value="Reactome"/>
</dbReference>
<dbReference type="GO" id="GO:0005615">
    <property type="term" value="C:extracellular space"/>
    <property type="evidence" value="ECO:0000304"/>
    <property type="project" value="ProtInc"/>
</dbReference>
<dbReference type="GO" id="GO:0008009">
    <property type="term" value="F:chemokine activity"/>
    <property type="evidence" value="ECO:0000304"/>
    <property type="project" value="ProtInc"/>
</dbReference>
<dbReference type="GO" id="GO:0006935">
    <property type="term" value="P:chemotaxis"/>
    <property type="evidence" value="ECO:0000304"/>
    <property type="project" value="ProtInc"/>
</dbReference>
<dbReference type="GO" id="GO:0006955">
    <property type="term" value="P:immune response"/>
    <property type="evidence" value="ECO:0007669"/>
    <property type="project" value="InterPro"/>
</dbReference>
<dbReference type="GO" id="GO:0006954">
    <property type="term" value="P:inflammatory response"/>
    <property type="evidence" value="ECO:0000304"/>
    <property type="project" value="ProtInc"/>
</dbReference>
<dbReference type="GO" id="GO:0002237">
    <property type="term" value="P:response to molecule of bacterial origin"/>
    <property type="evidence" value="ECO:0000314"/>
    <property type="project" value="BHF-UCL"/>
</dbReference>
<dbReference type="CDD" id="cd00273">
    <property type="entry name" value="Chemokine_CXC"/>
    <property type="match status" value="1"/>
</dbReference>
<dbReference type="FunFam" id="2.40.50.40:FF:000004">
    <property type="entry name" value="C-X-C motif chemokine"/>
    <property type="match status" value="1"/>
</dbReference>
<dbReference type="Gene3D" id="2.40.50.40">
    <property type="match status" value="1"/>
</dbReference>
<dbReference type="InterPro" id="IPR039809">
    <property type="entry name" value="Chemokine_b/g/d"/>
</dbReference>
<dbReference type="InterPro" id="IPR001089">
    <property type="entry name" value="Chemokine_CXC"/>
</dbReference>
<dbReference type="InterPro" id="IPR018048">
    <property type="entry name" value="Chemokine_CXC_CS"/>
</dbReference>
<dbReference type="InterPro" id="IPR001811">
    <property type="entry name" value="Chemokine_IL8-like_dom"/>
</dbReference>
<dbReference type="InterPro" id="IPR033899">
    <property type="entry name" value="CXC_Chemokine_domain"/>
</dbReference>
<dbReference type="InterPro" id="IPR036048">
    <property type="entry name" value="Interleukin_8-like_sf"/>
</dbReference>
<dbReference type="PANTHER" id="PTHR12015:SF206">
    <property type="entry name" value="C-X-C MOTIF CHEMOKINE 2"/>
    <property type="match status" value="1"/>
</dbReference>
<dbReference type="PANTHER" id="PTHR12015">
    <property type="entry name" value="SMALL INDUCIBLE CYTOKINE A"/>
    <property type="match status" value="1"/>
</dbReference>
<dbReference type="Pfam" id="PF00048">
    <property type="entry name" value="IL8"/>
    <property type="match status" value="1"/>
</dbReference>
<dbReference type="PRINTS" id="PR00436">
    <property type="entry name" value="INTERLEUKIN8"/>
</dbReference>
<dbReference type="PRINTS" id="PR00437">
    <property type="entry name" value="SMALLCYTKCXC"/>
</dbReference>
<dbReference type="SMART" id="SM00199">
    <property type="entry name" value="SCY"/>
    <property type="match status" value="1"/>
</dbReference>
<dbReference type="SUPFAM" id="SSF54117">
    <property type="entry name" value="Interleukin 8-like chemokines"/>
    <property type="match status" value="1"/>
</dbReference>
<dbReference type="PROSITE" id="PS00471">
    <property type="entry name" value="SMALL_CYTOKINES_CXC"/>
    <property type="match status" value="1"/>
</dbReference>
<evidence type="ECO:0000269" key="1">
    <source>
    </source>
</evidence>
<evidence type="ECO:0000305" key="2"/>
<evidence type="ECO:0007829" key="3">
    <source>
        <dbReference type="PDB" id="1QNK"/>
    </source>
</evidence>
<evidence type="ECO:0007829" key="4">
    <source>
        <dbReference type="PDB" id="5OB5"/>
    </source>
</evidence>